<sequence length="107" mass="12110">MRTLMLIILSILIYLSSAKPVFGPIGVVEKHKIAKMLQNEQKSLQMLEEEQALLEKVVETLSNDIEEKEEKIEKLRRSYTNGNGALANIYEDYRSGFKSGIGARPGR</sequence>
<proteinExistence type="inferred from homology"/>
<evidence type="ECO:0000255" key="1"/>
<feature type="signal peptide" evidence="1">
    <location>
        <begin position="1"/>
        <end position="18"/>
    </location>
</feature>
<feature type="chain" id="PRO_0000014292" description="Uncharacterized protein K11H3.5">
    <location>
        <begin position="19"/>
        <end position="107"/>
    </location>
</feature>
<gene>
    <name type="ORF">K11H3.5</name>
</gene>
<protein>
    <recommendedName>
        <fullName>Uncharacterized protein K11H3.5</fullName>
    </recommendedName>
</protein>
<name>YM45_CAEEL</name>
<keyword id="KW-1185">Reference proteome</keyword>
<keyword id="KW-0732">Signal</keyword>
<reference key="1">
    <citation type="journal article" date="1994" name="Nature">
        <title>2.2 Mb of contiguous nucleotide sequence from chromosome III of C. elegans.</title>
        <authorList>
            <person name="Wilson R."/>
            <person name="Ainscough R."/>
            <person name="Anderson K."/>
            <person name="Baynes C."/>
            <person name="Berks M."/>
            <person name="Bonfield J."/>
            <person name="Burton J."/>
            <person name="Connell M."/>
            <person name="Copsey T."/>
            <person name="Cooper J."/>
            <person name="Coulson A."/>
            <person name="Craxton M."/>
            <person name="Dear S."/>
            <person name="Du Z."/>
            <person name="Durbin R."/>
            <person name="Favello A."/>
            <person name="Fraser A."/>
            <person name="Fulton L."/>
            <person name="Gardner A."/>
            <person name="Green P."/>
            <person name="Hawkins T."/>
            <person name="Hillier L."/>
            <person name="Jier M."/>
            <person name="Johnston L."/>
            <person name="Jones M."/>
            <person name="Kershaw J."/>
            <person name="Kirsten J."/>
            <person name="Laisster N."/>
            <person name="Latreille P."/>
            <person name="Lightning J."/>
            <person name="Lloyd C."/>
            <person name="Mortimore B."/>
            <person name="O'Callaghan M."/>
            <person name="Parsons J."/>
            <person name="Percy C."/>
            <person name="Rifken L."/>
            <person name="Roopra A."/>
            <person name="Saunders D."/>
            <person name="Shownkeen R."/>
            <person name="Sims M."/>
            <person name="Smaldon N."/>
            <person name="Smith A."/>
            <person name="Smith M."/>
            <person name="Sonnhammer E."/>
            <person name="Staden R."/>
            <person name="Sulston J."/>
            <person name="Thierry-Mieg J."/>
            <person name="Thomas K."/>
            <person name="Vaudin M."/>
            <person name="Vaughan K."/>
            <person name="Waterston R."/>
            <person name="Watson A."/>
            <person name="Weinstock L."/>
            <person name="Wilkinson-Sproat J."/>
            <person name="Wohldman P."/>
        </authorList>
    </citation>
    <scope>NUCLEOTIDE SEQUENCE [LARGE SCALE GENOMIC DNA]</scope>
    <source>
        <strain>Bristol N2</strain>
    </source>
</reference>
<reference key="2">
    <citation type="journal article" date="1998" name="Science">
        <title>Genome sequence of the nematode C. elegans: a platform for investigating biology.</title>
        <authorList>
            <consortium name="The C. elegans sequencing consortium"/>
        </authorList>
    </citation>
    <scope>NUCLEOTIDE SEQUENCE [LARGE SCALE GENOMIC DNA]</scope>
    <source>
        <strain>Bristol N2</strain>
    </source>
</reference>
<dbReference type="EMBL" id="Z22180">
    <property type="protein sequence ID" value="CAA80177.2"/>
    <property type="molecule type" value="Genomic_DNA"/>
</dbReference>
<dbReference type="PIR" id="S40758">
    <property type="entry name" value="S40758"/>
</dbReference>
<dbReference type="RefSeq" id="NP_001255037.1">
    <property type="nucleotide sequence ID" value="NM_001268108.2"/>
</dbReference>
<dbReference type="SMR" id="P34521"/>
<dbReference type="FunCoup" id="P34521">
    <property type="interactions" value="10"/>
</dbReference>
<dbReference type="PaxDb" id="6239-K11H3.5a"/>
<dbReference type="EnsemblMetazoa" id="K11H3.5a.1">
    <property type="protein sequence ID" value="K11H3.5a.1"/>
    <property type="gene ID" value="WBGene00010782"/>
</dbReference>
<dbReference type="GeneID" id="187308"/>
<dbReference type="KEGG" id="cel:CELE_K11H3.5"/>
<dbReference type="UCSC" id="K11H3.5">
    <property type="organism name" value="c. elegans"/>
</dbReference>
<dbReference type="AGR" id="WB:WBGene00010782"/>
<dbReference type="CTD" id="187308"/>
<dbReference type="WormBase" id="K11H3.5a">
    <property type="protein sequence ID" value="CE37781"/>
    <property type="gene ID" value="WBGene00010782"/>
</dbReference>
<dbReference type="eggNOG" id="ENOG502TI7F">
    <property type="taxonomic scope" value="Eukaryota"/>
</dbReference>
<dbReference type="HOGENOM" id="CLU_2212316_0_0_1"/>
<dbReference type="InParanoid" id="P34521"/>
<dbReference type="OMA" id="RSYTHGH"/>
<dbReference type="OrthoDB" id="5847653at2759"/>
<dbReference type="PRO" id="PR:P34521"/>
<dbReference type="Proteomes" id="UP000001940">
    <property type="component" value="Chromosome III"/>
</dbReference>
<dbReference type="Bgee" id="WBGene00010782">
    <property type="expression patterns" value="Expressed in adult organism and 3 other cell types or tissues"/>
</dbReference>
<accession>P34521</accession>
<organism>
    <name type="scientific">Caenorhabditis elegans</name>
    <dbReference type="NCBI Taxonomy" id="6239"/>
    <lineage>
        <taxon>Eukaryota</taxon>
        <taxon>Metazoa</taxon>
        <taxon>Ecdysozoa</taxon>
        <taxon>Nematoda</taxon>
        <taxon>Chromadorea</taxon>
        <taxon>Rhabditida</taxon>
        <taxon>Rhabditina</taxon>
        <taxon>Rhabditomorpha</taxon>
        <taxon>Rhabditoidea</taxon>
        <taxon>Rhabditidae</taxon>
        <taxon>Peloderinae</taxon>
        <taxon>Caenorhabditis</taxon>
    </lineage>
</organism>